<feature type="chain" id="PRO_0000157952" description="tRNA (pseudouridine(54)-N(1))-methyltransferase">
    <location>
        <begin position="1"/>
        <end position="138"/>
    </location>
</feature>
<feature type="binding site" evidence="1">
    <location>
        <position position="73"/>
    </location>
    <ligand>
        <name>S-adenosyl-L-methionine</name>
        <dbReference type="ChEBI" id="CHEBI:59789"/>
    </ligand>
</feature>
<feature type="binding site" evidence="1">
    <location>
        <position position="94"/>
    </location>
    <ligand>
        <name>S-adenosyl-L-methionine</name>
        <dbReference type="ChEBI" id="CHEBI:59789"/>
    </ligand>
</feature>
<name>TRMY_PYRAE</name>
<evidence type="ECO:0000250" key="1"/>
<evidence type="ECO:0000305" key="2"/>
<reference key="1">
    <citation type="journal article" date="2002" name="Proc. Natl. Acad. Sci. U.S.A.">
        <title>Genome sequence of the hyperthermophilic crenarchaeon Pyrobaculum aerophilum.</title>
        <authorList>
            <person name="Fitz-Gibbon S.T."/>
            <person name="Ladner H."/>
            <person name="Kim U.-J."/>
            <person name="Stetter K.O."/>
            <person name="Simon M.I."/>
            <person name="Miller J.H."/>
        </authorList>
    </citation>
    <scope>NUCLEOTIDE SEQUENCE [LARGE SCALE GENOMIC DNA]</scope>
    <source>
        <strain>ATCC 51768 / DSM 7523 / JCM 9630 / CIP 104966 / NBRC 100827 / IM2</strain>
    </source>
</reference>
<comment type="function">
    <text evidence="1">Specifically catalyzes the N1-methylation of pseudouridine at position 54 (Psi54) in tRNAs.</text>
</comment>
<comment type="catalytic activity">
    <reaction>
        <text>pseudouridine(54) in tRNA + S-adenosyl-L-methionine = N(1)-methylpseudouridine(54) in tRNA + S-adenosyl-L-homocysteine + H(+)</text>
        <dbReference type="Rhea" id="RHEA:55292"/>
        <dbReference type="Rhea" id="RHEA-COMP:14140"/>
        <dbReference type="Rhea" id="RHEA-COMP:14141"/>
        <dbReference type="ChEBI" id="CHEBI:15378"/>
        <dbReference type="ChEBI" id="CHEBI:57856"/>
        <dbReference type="ChEBI" id="CHEBI:59789"/>
        <dbReference type="ChEBI" id="CHEBI:65314"/>
        <dbReference type="ChEBI" id="CHEBI:74890"/>
        <dbReference type="EC" id="2.1.1.257"/>
    </reaction>
</comment>
<comment type="subunit">
    <text evidence="1">Homodimer.</text>
</comment>
<comment type="subcellular location">
    <subcellularLocation>
        <location evidence="2">Cytoplasm</location>
    </subcellularLocation>
</comment>
<comment type="similarity">
    <text evidence="2">Belongs to the methyltransferase superfamily. TrmY family.</text>
</comment>
<proteinExistence type="inferred from homology"/>
<keyword id="KW-0963">Cytoplasm</keyword>
<keyword id="KW-0489">Methyltransferase</keyword>
<keyword id="KW-1185">Reference proteome</keyword>
<keyword id="KW-0949">S-adenosyl-L-methionine</keyword>
<keyword id="KW-0808">Transferase</keyword>
<keyword id="KW-0819">tRNA processing</keyword>
<sequence length="138" mass="15818">MKNRFDVLVDFVIESITGGVREVYVMLCDGSTYLITSLPSQRARAVARWLLSRQPFKTSLQAIIAKYRSVYYLHERGRDISEARLDGNGLYIFGDHDGLSREDEELLAKHAEWISLGSTPYMSWHAAAYLAYLLKRQV</sequence>
<accession>Q8ZVQ3</accession>
<dbReference type="EC" id="2.1.1.257"/>
<dbReference type="EMBL" id="AE009441">
    <property type="protein sequence ID" value="AAL64003.1"/>
    <property type="molecule type" value="Genomic_DNA"/>
</dbReference>
<dbReference type="SMR" id="Q8ZVQ3"/>
<dbReference type="STRING" id="178306.PAE2175"/>
<dbReference type="EnsemblBacteria" id="AAL64003">
    <property type="protein sequence ID" value="AAL64003"/>
    <property type="gene ID" value="PAE2175"/>
</dbReference>
<dbReference type="KEGG" id="pai:PAE2175"/>
<dbReference type="PATRIC" id="fig|178306.9.peg.1613"/>
<dbReference type="eggNOG" id="arCOG01239">
    <property type="taxonomic scope" value="Archaea"/>
</dbReference>
<dbReference type="HOGENOM" id="CLU_1656942_0_0_2"/>
<dbReference type="InParanoid" id="Q8ZVQ3"/>
<dbReference type="Proteomes" id="UP000002439">
    <property type="component" value="Chromosome"/>
</dbReference>
<dbReference type="GO" id="GO:0005737">
    <property type="term" value="C:cytoplasm"/>
    <property type="evidence" value="ECO:0007669"/>
    <property type="project" value="UniProtKB-SubCell"/>
</dbReference>
<dbReference type="GO" id="GO:0008757">
    <property type="term" value="F:S-adenosylmethionine-dependent methyltransferase activity"/>
    <property type="evidence" value="ECO:0000318"/>
    <property type="project" value="GO_Central"/>
</dbReference>
<dbReference type="GO" id="GO:0008175">
    <property type="term" value="F:tRNA methyltransferase activity"/>
    <property type="evidence" value="ECO:0000318"/>
    <property type="project" value="GO_Central"/>
</dbReference>
<dbReference type="GO" id="GO:0030488">
    <property type="term" value="P:tRNA methylation"/>
    <property type="evidence" value="ECO:0000318"/>
    <property type="project" value="GO_Central"/>
</dbReference>
<dbReference type="Gene3D" id="3.40.1280.10">
    <property type="match status" value="1"/>
</dbReference>
<dbReference type="InterPro" id="IPR029028">
    <property type="entry name" value="Alpha/beta_knot_MTases"/>
</dbReference>
<dbReference type="InterPro" id="IPR007158">
    <property type="entry name" value="TrmY"/>
</dbReference>
<dbReference type="InterPro" id="IPR029026">
    <property type="entry name" value="tRNA_m1G_MTases_N"/>
</dbReference>
<dbReference type="PANTHER" id="PTHR40703">
    <property type="entry name" value="TRNA (PSEUDOURIDINE(54)-N(1))-METHYLTRANSFERASE"/>
    <property type="match status" value="1"/>
</dbReference>
<dbReference type="PANTHER" id="PTHR40703:SF1">
    <property type="entry name" value="TRNA (PSEUDOURIDINE(54)-N(1))-METHYLTRANSFERASE"/>
    <property type="match status" value="1"/>
</dbReference>
<dbReference type="Pfam" id="PF04013">
    <property type="entry name" value="Methyltrn_RNA_2"/>
    <property type="match status" value="1"/>
</dbReference>
<dbReference type="SUPFAM" id="SSF75217">
    <property type="entry name" value="alpha/beta knot"/>
    <property type="match status" value="1"/>
</dbReference>
<protein>
    <recommendedName>
        <fullName>tRNA (pseudouridine(54)-N(1))-methyltransferase</fullName>
        <ecNumber>2.1.1.257</ecNumber>
    </recommendedName>
</protein>
<gene>
    <name type="primary">trmY</name>
    <name type="ordered locus">PAE2175</name>
</gene>
<organism>
    <name type="scientific">Pyrobaculum aerophilum (strain ATCC 51768 / DSM 7523 / JCM 9630 / CIP 104966 / NBRC 100827 / IM2)</name>
    <dbReference type="NCBI Taxonomy" id="178306"/>
    <lineage>
        <taxon>Archaea</taxon>
        <taxon>Thermoproteota</taxon>
        <taxon>Thermoprotei</taxon>
        <taxon>Thermoproteales</taxon>
        <taxon>Thermoproteaceae</taxon>
        <taxon>Pyrobaculum</taxon>
    </lineage>
</organism>